<organism>
    <name type="scientific">Homo sapiens</name>
    <name type="common">Human</name>
    <dbReference type="NCBI Taxonomy" id="9606"/>
    <lineage>
        <taxon>Eukaryota</taxon>
        <taxon>Metazoa</taxon>
        <taxon>Chordata</taxon>
        <taxon>Craniata</taxon>
        <taxon>Vertebrata</taxon>
        <taxon>Euteleostomi</taxon>
        <taxon>Mammalia</taxon>
        <taxon>Eutheria</taxon>
        <taxon>Euarchontoglires</taxon>
        <taxon>Primates</taxon>
        <taxon>Haplorrhini</taxon>
        <taxon>Catarrhini</taxon>
        <taxon>Hominidae</taxon>
        <taxon>Homo</taxon>
    </lineage>
</organism>
<dbReference type="EMBL" id="AK302967">
    <property type="protein sequence ID" value="BAG64115.1"/>
    <property type="molecule type" value="mRNA"/>
</dbReference>
<dbReference type="EMBL" id="AL627107">
    <property type="status" value="NOT_ANNOTATED_CDS"/>
    <property type="molecule type" value="Genomic_DNA"/>
</dbReference>
<dbReference type="EMBL" id="BC132739">
    <property type="protein sequence ID" value="AAI32740.1"/>
    <property type="molecule type" value="mRNA"/>
</dbReference>
<dbReference type="EMBL" id="BC136760">
    <property type="protein sequence ID" value="AAI36761.1"/>
    <property type="molecule type" value="mRNA"/>
</dbReference>
<dbReference type="CCDS" id="CCDS31967.1">
    <molecule id="Q5SVS4-1"/>
</dbReference>
<dbReference type="CCDS" id="CCDS66539.1">
    <molecule id="Q5SVS4-2"/>
</dbReference>
<dbReference type="RefSeq" id="NP_001010875.1">
    <molecule id="Q5SVS4-1"/>
    <property type="nucleotide sequence ID" value="NM_001010875.4"/>
</dbReference>
<dbReference type="RefSeq" id="NP_001273735.1">
    <molecule id="Q5SVS4-2"/>
    <property type="nucleotide sequence ID" value="NM_001286806.2"/>
</dbReference>
<dbReference type="RefSeq" id="XP_016876013.1">
    <molecule id="Q5SVS4-1"/>
    <property type="nucleotide sequence ID" value="XM_017020524.3"/>
</dbReference>
<dbReference type="RefSeq" id="XP_047286197.1">
    <molecule id="Q5SVS4-1"/>
    <property type="nucleotide sequence ID" value="XM_047430241.1"/>
</dbReference>
<dbReference type="RefSeq" id="XP_054230362.1">
    <molecule id="Q5SVS4-1"/>
    <property type="nucleotide sequence ID" value="XM_054374387.1"/>
</dbReference>
<dbReference type="RefSeq" id="XP_054230363.1">
    <molecule id="Q5SVS4-1"/>
    <property type="nucleotide sequence ID" value="XM_054374388.1"/>
</dbReference>
<dbReference type="SMR" id="Q5SVS4"/>
<dbReference type="BioGRID" id="128971">
    <property type="interactions" value="42"/>
</dbReference>
<dbReference type="FunCoup" id="Q5SVS4">
    <property type="interactions" value="987"/>
</dbReference>
<dbReference type="IntAct" id="Q5SVS4">
    <property type="interactions" value="36"/>
</dbReference>
<dbReference type="STRING" id="9606.ENSP00000429168"/>
<dbReference type="TCDB" id="2.A.29.24.4">
    <property type="family name" value="the mitochondrial carrier (mc) family"/>
</dbReference>
<dbReference type="GlyCosmos" id="Q5SVS4">
    <property type="glycosylation" value="1 site, 2 glycans"/>
</dbReference>
<dbReference type="GlyGen" id="Q5SVS4">
    <property type="glycosylation" value="1 site, 2 O-linked glycans (1 site)"/>
</dbReference>
<dbReference type="iPTMnet" id="Q5SVS4"/>
<dbReference type="PhosphoSitePlus" id="Q5SVS4"/>
<dbReference type="BioMuta" id="SLC25A30"/>
<dbReference type="DMDM" id="74743890"/>
<dbReference type="jPOST" id="Q5SVS4"/>
<dbReference type="MassIVE" id="Q5SVS4"/>
<dbReference type="PaxDb" id="9606-ENSP00000429168"/>
<dbReference type="PeptideAtlas" id="Q5SVS4"/>
<dbReference type="ProteomicsDB" id="27787"/>
<dbReference type="ProteomicsDB" id="63953">
    <molecule id="Q5SVS4-1"/>
</dbReference>
<dbReference type="Pumba" id="Q5SVS4"/>
<dbReference type="Antibodypedia" id="49461">
    <property type="antibodies" value="10 antibodies from 5 providers"/>
</dbReference>
<dbReference type="DNASU" id="253512"/>
<dbReference type="Ensembl" id="ENST00000519676.6">
    <molecule id="Q5SVS4-1"/>
    <property type="protein sequence ID" value="ENSP00000429168.1"/>
    <property type="gene ID" value="ENSG00000174032.17"/>
</dbReference>
<dbReference type="Ensembl" id="ENST00000539591.5">
    <molecule id="Q5SVS4-2"/>
    <property type="protein sequence ID" value="ENSP00000443542.1"/>
    <property type="gene ID" value="ENSG00000174032.17"/>
</dbReference>
<dbReference type="GeneID" id="253512"/>
<dbReference type="KEGG" id="hsa:253512"/>
<dbReference type="MANE-Select" id="ENST00000519676.6">
    <property type="protein sequence ID" value="ENSP00000429168.1"/>
    <property type="RefSeq nucleotide sequence ID" value="NM_001010875.4"/>
    <property type="RefSeq protein sequence ID" value="NP_001010875.1"/>
</dbReference>
<dbReference type="UCSC" id="uc001vag.5">
    <molecule id="Q5SVS4-1"/>
    <property type="organism name" value="human"/>
</dbReference>
<dbReference type="AGR" id="HGNC:27371"/>
<dbReference type="CTD" id="253512"/>
<dbReference type="DisGeNET" id="253512"/>
<dbReference type="GeneCards" id="SLC25A30"/>
<dbReference type="HGNC" id="HGNC:27371">
    <property type="gene designation" value="SLC25A30"/>
</dbReference>
<dbReference type="HPA" id="ENSG00000174032">
    <property type="expression patterns" value="Tissue enhanced (heart muscle, skeletal muscle, tongue)"/>
</dbReference>
<dbReference type="MIM" id="610793">
    <property type="type" value="gene"/>
</dbReference>
<dbReference type="neXtProt" id="NX_Q5SVS4"/>
<dbReference type="OpenTargets" id="ENSG00000174032"/>
<dbReference type="PharmGKB" id="PA134931353"/>
<dbReference type="VEuPathDB" id="HostDB:ENSG00000174032"/>
<dbReference type="eggNOG" id="KOG0753">
    <property type="taxonomic scope" value="Eukaryota"/>
</dbReference>
<dbReference type="GeneTree" id="ENSGT00940000158961"/>
<dbReference type="HOGENOM" id="CLU_015166_14_2_1"/>
<dbReference type="InParanoid" id="Q5SVS4"/>
<dbReference type="OMA" id="IMPALNW"/>
<dbReference type="OrthoDB" id="756301at2759"/>
<dbReference type="PAN-GO" id="Q5SVS4">
    <property type="GO annotations" value="12 GO annotations based on evolutionary models"/>
</dbReference>
<dbReference type="PhylomeDB" id="Q5SVS4"/>
<dbReference type="TreeFam" id="TF323211"/>
<dbReference type="PathwayCommons" id="Q5SVS4"/>
<dbReference type="SignaLink" id="Q5SVS4"/>
<dbReference type="BioGRID-ORCS" id="253512">
    <property type="hits" value="9 hits in 1098 CRISPR screens"/>
</dbReference>
<dbReference type="ChiTaRS" id="SLC25A30">
    <property type="organism name" value="human"/>
</dbReference>
<dbReference type="GenomeRNAi" id="253512"/>
<dbReference type="Pharos" id="Q5SVS4">
    <property type="development level" value="Tdark"/>
</dbReference>
<dbReference type="PRO" id="PR:Q5SVS4"/>
<dbReference type="Proteomes" id="UP000005640">
    <property type="component" value="Chromosome 13"/>
</dbReference>
<dbReference type="RNAct" id="Q5SVS4">
    <property type="molecule type" value="protein"/>
</dbReference>
<dbReference type="Bgee" id="ENSG00000174032">
    <property type="expression patterns" value="Expressed in biceps brachii and 168 other cell types or tissues"/>
</dbReference>
<dbReference type="ExpressionAtlas" id="Q5SVS4">
    <property type="expression patterns" value="baseline and differential"/>
</dbReference>
<dbReference type="GO" id="GO:0005743">
    <property type="term" value="C:mitochondrial inner membrane"/>
    <property type="evidence" value="ECO:0007669"/>
    <property type="project" value="UniProtKB-SubCell"/>
</dbReference>
<dbReference type="GO" id="GO:0005739">
    <property type="term" value="C:mitochondrion"/>
    <property type="evidence" value="ECO:0006056"/>
    <property type="project" value="FlyBase"/>
</dbReference>
<dbReference type="GO" id="GO:0005452">
    <property type="term" value="F:solute:inorganic anion antiporter activity"/>
    <property type="evidence" value="ECO:0000314"/>
    <property type="project" value="UniProtKB"/>
</dbReference>
<dbReference type="GO" id="GO:0022857">
    <property type="term" value="F:transmembrane transporter activity"/>
    <property type="evidence" value="ECO:0000318"/>
    <property type="project" value="GO_Central"/>
</dbReference>
<dbReference type="GO" id="GO:0015698">
    <property type="term" value="P:inorganic anion transport"/>
    <property type="evidence" value="ECO:0000314"/>
    <property type="project" value="UniProtKB"/>
</dbReference>
<dbReference type="FunFam" id="1.50.40.10:FF:000006">
    <property type="entry name" value="brain mitochondrial carrier protein 1 isoform X1"/>
    <property type="match status" value="1"/>
</dbReference>
<dbReference type="Gene3D" id="1.50.40.10">
    <property type="entry name" value="Mitochondrial carrier domain"/>
    <property type="match status" value="1"/>
</dbReference>
<dbReference type="InterPro" id="IPR002067">
    <property type="entry name" value="Mit_carrier"/>
</dbReference>
<dbReference type="InterPro" id="IPR050391">
    <property type="entry name" value="Mito_Metabolite_Transporter"/>
</dbReference>
<dbReference type="InterPro" id="IPR018108">
    <property type="entry name" value="Mitochondrial_sb/sol_carrier"/>
</dbReference>
<dbReference type="InterPro" id="IPR023395">
    <property type="entry name" value="Mt_carrier_dom_sf"/>
</dbReference>
<dbReference type="PANTHER" id="PTHR45618">
    <property type="entry name" value="MITOCHONDRIAL DICARBOXYLATE CARRIER-RELATED"/>
    <property type="match status" value="1"/>
</dbReference>
<dbReference type="Pfam" id="PF00153">
    <property type="entry name" value="Mito_carr"/>
    <property type="match status" value="3"/>
</dbReference>
<dbReference type="PRINTS" id="PR00784">
    <property type="entry name" value="MTUNCOUPLING"/>
</dbReference>
<dbReference type="SUPFAM" id="SSF103506">
    <property type="entry name" value="Mitochondrial carrier"/>
    <property type="match status" value="1"/>
</dbReference>
<dbReference type="PROSITE" id="PS50920">
    <property type="entry name" value="SOLCAR"/>
    <property type="match status" value="3"/>
</dbReference>
<reference key="1">
    <citation type="journal article" date="2004" name="Nat. Genet.">
        <title>Complete sequencing and characterization of 21,243 full-length human cDNAs.</title>
        <authorList>
            <person name="Ota T."/>
            <person name="Suzuki Y."/>
            <person name="Nishikawa T."/>
            <person name="Otsuki T."/>
            <person name="Sugiyama T."/>
            <person name="Irie R."/>
            <person name="Wakamatsu A."/>
            <person name="Hayashi K."/>
            <person name="Sato H."/>
            <person name="Nagai K."/>
            <person name="Kimura K."/>
            <person name="Makita H."/>
            <person name="Sekine M."/>
            <person name="Obayashi M."/>
            <person name="Nishi T."/>
            <person name="Shibahara T."/>
            <person name="Tanaka T."/>
            <person name="Ishii S."/>
            <person name="Yamamoto J."/>
            <person name="Saito K."/>
            <person name="Kawai Y."/>
            <person name="Isono Y."/>
            <person name="Nakamura Y."/>
            <person name="Nagahari K."/>
            <person name="Murakami K."/>
            <person name="Yasuda T."/>
            <person name="Iwayanagi T."/>
            <person name="Wagatsuma M."/>
            <person name="Shiratori A."/>
            <person name="Sudo H."/>
            <person name="Hosoiri T."/>
            <person name="Kaku Y."/>
            <person name="Kodaira H."/>
            <person name="Kondo H."/>
            <person name="Sugawara M."/>
            <person name="Takahashi M."/>
            <person name="Kanda K."/>
            <person name="Yokoi T."/>
            <person name="Furuya T."/>
            <person name="Kikkawa E."/>
            <person name="Omura Y."/>
            <person name="Abe K."/>
            <person name="Kamihara K."/>
            <person name="Katsuta N."/>
            <person name="Sato K."/>
            <person name="Tanikawa M."/>
            <person name="Yamazaki M."/>
            <person name="Ninomiya K."/>
            <person name="Ishibashi T."/>
            <person name="Yamashita H."/>
            <person name="Murakawa K."/>
            <person name="Fujimori K."/>
            <person name="Tanai H."/>
            <person name="Kimata M."/>
            <person name="Watanabe M."/>
            <person name="Hiraoka S."/>
            <person name="Chiba Y."/>
            <person name="Ishida S."/>
            <person name="Ono Y."/>
            <person name="Takiguchi S."/>
            <person name="Watanabe S."/>
            <person name="Yosida M."/>
            <person name="Hotuta T."/>
            <person name="Kusano J."/>
            <person name="Kanehori K."/>
            <person name="Takahashi-Fujii A."/>
            <person name="Hara H."/>
            <person name="Tanase T.-O."/>
            <person name="Nomura Y."/>
            <person name="Togiya S."/>
            <person name="Komai F."/>
            <person name="Hara R."/>
            <person name="Takeuchi K."/>
            <person name="Arita M."/>
            <person name="Imose N."/>
            <person name="Musashino K."/>
            <person name="Yuuki H."/>
            <person name="Oshima A."/>
            <person name="Sasaki N."/>
            <person name="Aotsuka S."/>
            <person name="Yoshikawa Y."/>
            <person name="Matsunawa H."/>
            <person name="Ichihara T."/>
            <person name="Shiohata N."/>
            <person name="Sano S."/>
            <person name="Moriya S."/>
            <person name="Momiyama H."/>
            <person name="Satoh N."/>
            <person name="Takami S."/>
            <person name="Terashima Y."/>
            <person name="Suzuki O."/>
            <person name="Nakagawa S."/>
            <person name="Senoh A."/>
            <person name="Mizoguchi H."/>
            <person name="Goto Y."/>
            <person name="Shimizu F."/>
            <person name="Wakebe H."/>
            <person name="Hishigaki H."/>
            <person name="Watanabe T."/>
            <person name="Sugiyama A."/>
            <person name="Takemoto M."/>
            <person name="Kawakami B."/>
            <person name="Yamazaki M."/>
            <person name="Watanabe K."/>
            <person name="Kumagai A."/>
            <person name="Itakura S."/>
            <person name="Fukuzumi Y."/>
            <person name="Fujimori Y."/>
            <person name="Komiyama M."/>
            <person name="Tashiro H."/>
            <person name="Tanigami A."/>
            <person name="Fujiwara T."/>
            <person name="Ono T."/>
            <person name="Yamada K."/>
            <person name="Fujii Y."/>
            <person name="Ozaki K."/>
            <person name="Hirao M."/>
            <person name="Ohmori Y."/>
            <person name="Kawabata A."/>
            <person name="Hikiji T."/>
            <person name="Kobatake N."/>
            <person name="Inagaki H."/>
            <person name="Ikema Y."/>
            <person name="Okamoto S."/>
            <person name="Okitani R."/>
            <person name="Kawakami T."/>
            <person name="Noguchi S."/>
            <person name="Itoh T."/>
            <person name="Shigeta K."/>
            <person name="Senba T."/>
            <person name="Matsumura K."/>
            <person name="Nakajima Y."/>
            <person name="Mizuno T."/>
            <person name="Morinaga M."/>
            <person name="Sasaki M."/>
            <person name="Togashi T."/>
            <person name="Oyama M."/>
            <person name="Hata H."/>
            <person name="Watanabe M."/>
            <person name="Komatsu T."/>
            <person name="Mizushima-Sugano J."/>
            <person name="Satoh T."/>
            <person name="Shirai Y."/>
            <person name="Takahashi Y."/>
            <person name="Nakagawa K."/>
            <person name="Okumura K."/>
            <person name="Nagase T."/>
            <person name="Nomura N."/>
            <person name="Kikuchi H."/>
            <person name="Masuho Y."/>
            <person name="Yamashita R."/>
            <person name="Nakai K."/>
            <person name="Yada T."/>
            <person name="Nakamura Y."/>
            <person name="Ohara O."/>
            <person name="Isogai T."/>
            <person name="Sugano S."/>
        </authorList>
    </citation>
    <scope>NUCLEOTIDE SEQUENCE [LARGE SCALE MRNA] (ISOFORM 2)</scope>
    <source>
        <tissue>Testis</tissue>
    </source>
</reference>
<reference key="2">
    <citation type="journal article" date="2004" name="Nature">
        <title>The DNA sequence and analysis of human chromosome 13.</title>
        <authorList>
            <person name="Dunham A."/>
            <person name="Matthews L.H."/>
            <person name="Burton J."/>
            <person name="Ashurst J.L."/>
            <person name="Howe K.L."/>
            <person name="Ashcroft K.J."/>
            <person name="Beare D.M."/>
            <person name="Burford D.C."/>
            <person name="Hunt S.E."/>
            <person name="Griffiths-Jones S."/>
            <person name="Jones M.C."/>
            <person name="Keenan S.J."/>
            <person name="Oliver K."/>
            <person name="Scott C.E."/>
            <person name="Ainscough R."/>
            <person name="Almeida J.P."/>
            <person name="Ambrose K.D."/>
            <person name="Andrews D.T."/>
            <person name="Ashwell R.I.S."/>
            <person name="Babbage A.K."/>
            <person name="Bagguley C.L."/>
            <person name="Bailey J."/>
            <person name="Bannerjee R."/>
            <person name="Barlow K.F."/>
            <person name="Bates K."/>
            <person name="Beasley H."/>
            <person name="Bird C.P."/>
            <person name="Bray-Allen S."/>
            <person name="Brown A.J."/>
            <person name="Brown J.Y."/>
            <person name="Burrill W."/>
            <person name="Carder C."/>
            <person name="Carter N.P."/>
            <person name="Chapman J.C."/>
            <person name="Clamp M.E."/>
            <person name="Clark S.Y."/>
            <person name="Clarke G."/>
            <person name="Clee C.M."/>
            <person name="Clegg S.C."/>
            <person name="Cobley V."/>
            <person name="Collins J.E."/>
            <person name="Corby N."/>
            <person name="Coville G.J."/>
            <person name="Deloukas P."/>
            <person name="Dhami P."/>
            <person name="Dunham I."/>
            <person name="Dunn M."/>
            <person name="Earthrowl M.E."/>
            <person name="Ellington A.G."/>
            <person name="Faulkner L."/>
            <person name="Frankish A.G."/>
            <person name="Frankland J."/>
            <person name="French L."/>
            <person name="Garner P."/>
            <person name="Garnett J."/>
            <person name="Gilbert J.G.R."/>
            <person name="Gilson C.J."/>
            <person name="Ghori J."/>
            <person name="Grafham D.V."/>
            <person name="Gribble S.M."/>
            <person name="Griffiths C."/>
            <person name="Hall R.E."/>
            <person name="Hammond S."/>
            <person name="Harley J.L."/>
            <person name="Hart E.A."/>
            <person name="Heath P.D."/>
            <person name="Howden P.J."/>
            <person name="Huckle E.J."/>
            <person name="Hunt P.J."/>
            <person name="Hunt A.R."/>
            <person name="Johnson C."/>
            <person name="Johnson D."/>
            <person name="Kay M."/>
            <person name="Kimberley A.M."/>
            <person name="King A."/>
            <person name="Laird G.K."/>
            <person name="Langford C.J."/>
            <person name="Lawlor S."/>
            <person name="Leongamornlert D.A."/>
            <person name="Lloyd D.M."/>
            <person name="Lloyd C."/>
            <person name="Loveland J.E."/>
            <person name="Lovell J."/>
            <person name="Martin S."/>
            <person name="Mashreghi-Mohammadi M."/>
            <person name="McLaren S.J."/>
            <person name="McMurray A."/>
            <person name="Milne S."/>
            <person name="Moore M.J.F."/>
            <person name="Nickerson T."/>
            <person name="Palmer S.A."/>
            <person name="Pearce A.V."/>
            <person name="Peck A.I."/>
            <person name="Pelan S."/>
            <person name="Phillimore B."/>
            <person name="Porter K.M."/>
            <person name="Rice C.M."/>
            <person name="Searle S."/>
            <person name="Sehra H.K."/>
            <person name="Shownkeen R."/>
            <person name="Skuce C.D."/>
            <person name="Smith M."/>
            <person name="Steward C.A."/>
            <person name="Sycamore N."/>
            <person name="Tester J."/>
            <person name="Thomas D.W."/>
            <person name="Tracey A."/>
            <person name="Tromans A."/>
            <person name="Tubby B."/>
            <person name="Wall M."/>
            <person name="Wallis J.M."/>
            <person name="West A.P."/>
            <person name="Whitehead S.L."/>
            <person name="Willey D.L."/>
            <person name="Wilming L."/>
            <person name="Wray P.W."/>
            <person name="Wright M.W."/>
            <person name="Young L."/>
            <person name="Coulson A."/>
            <person name="Durbin R.M."/>
            <person name="Hubbard T."/>
            <person name="Sulston J.E."/>
            <person name="Beck S."/>
            <person name="Bentley D.R."/>
            <person name="Rogers J."/>
            <person name="Ross M.T."/>
        </authorList>
    </citation>
    <scope>NUCLEOTIDE SEQUENCE [LARGE SCALE GENOMIC DNA]</scope>
</reference>
<reference key="3">
    <citation type="journal article" date="2004" name="Genome Res.">
        <title>The status, quality, and expansion of the NIH full-length cDNA project: the Mammalian Gene Collection (MGC).</title>
        <authorList>
            <consortium name="The MGC Project Team"/>
        </authorList>
    </citation>
    <scope>NUCLEOTIDE SEQUENCE [LARGE SCALE MRNA] (ISOFORM 1)</scope>
    <source>
        <tissue>Brain</tissue>
    </source>
</reference>
<reference key="4">
    <citation type="journal article" date="2015" name="Mol. Cell">
        <title>SPG7 is an essential and conserved component of the mitochondrial permeability transition pore.</title>
        <authorList>
            <person name="Shanmughapriya S."/>
            <person name="Rajan S."/>
            <person name="Hoffman N.E."/>
            <person name="Higgins A.M."/>
            <person name="Tomar D."/>
            <person name="Nemani N."/>
            <person name="Hines K.J."/>
            <person name="Smith D.J."/>
            <person name="Eguchi A."/>
            <person name="Vallem S."/>
            <person name="Shaikh F."/>
            <person name="Cheung M."/>
            <person name="Leonard N.J."/>
            <person name="Stolakis R.S."/>
            <person name="Wolfers M.P."/>
            <person name="Ibetti J."/>
            <person name="Chuprun J.K."/>
            <person name="Jog N.R."/>
            <person name="Houser S.R."/>
            <person name="Koch W.J."/>
            <person name="Elrod J.W."/>
            <person name="Madesh M."/>
        </authorList>
    </citation>
    <scope>INTERACTION WITH VDAC1</scope>
</reference>
<reference key="5">
    <citation type="journal article" date="2015" name="Proteomics">
        <title>N-terminome analysis of the human mitochondrial proteome.</title>
        <authorList>
            <person name="Vaca Jacome A.S."/>
            <person name="Rabilloud T."/>
            <person name="Schaeffer-Reiss C."/>
            <person name="Rompais M."/>
            <person name="Ayoub D."/>
            <person name="Lane L."/>
            <person name="Bairoch A."/>
            <person name="Van Dorsselaer A."/>
            <person name="Carapito C."/>
        </authorList>
    </citation>
    <scope>ACETYLATION [LARGE SCALE ANALYSIS] AT SER-2</scope>
    <scope>CLEAVAGE OF INITIATOR METHIONINE [LARGE SCALE ANALYSIS]</scope>
    <scope>IDENTIFICATION BY MASS SPECTROMETRY [LARGE SCALE ANALYSIS]</scope>
</reference>
<reference key="6">
    <citation type="journal article" date="2019" name="Biochim. Biophys. Acta">
        <title>The human uncoupling proteins 5 and 6 (UCP5/SLC25A14 and UCP6/SLC25A30) transport sulfur oxyanions, phosphate and dicarboxylates.</title>
        <authorList>
            <person name="Gorgoglione R."/>
            <person name="Porcelli V."/>
            <person name="Santoro A."/>
            <person name="Daddabbo L."/>
            <person name="Vozza A."/>
            <person name="Monne M."/>
            <person name="Di Noia M.A."/>
            <person name="Palmieri L."/>
            <person name="Fiermonte G."/>
            <person name="Palmieri F."/>
        </authorList>
    </citation>
    <scope>FUNCTION</scope>
    <scope>TRANSPORTER ACTIVITY</scope>
    <scope>ACTIVITY REGULATION</scope>
    <scope>BIOPHYSICOCHEMICAL PROPERTIES</scope>
    <scope>IDENTIFICATION BY MASS SPECTROMETRY</scope>
</reference>
<protein>
    <recommendedName>
        <fullName evidence="8">Kidney mitochondrial carrier protein 1</fullName>
    </recommendedName>
    <alternativeName>
        <fullName>Solute carrier family 25 member 30</fullName>
    </alternativeName>
    <alternativeName>
        <fullName evidence="7">Uncoupling protein 6</fullName>
    </alternativeName>
</protein>
<sequence length="291" mass="32475">MSALNWKPFVYGGLASITAECGTFPIDLTKTRLQIQGQTNDAKFKEIRYRGMLHALVRIGREEGLKALYSGIAPAMLRQASYGTIKIGTYQSLKRLFIERPEDETLPINVICGILSGVISSTIANPTDVLKIRMQAQSNTIQGGMIGNFMNIYQQEGTRGLWKGVSLTAQRAAIVVGVELPVYDITKKHLILSGLMGDTVYTHFLSSFTCGLAGALASNPVDVVRTRMMNQRVLRDGRCSGYTGTLDCLLQTWKNEGFFALYKGFWPNWLRLGPWNIIFFVTYEQLKKLDL</sequence>
<proteinExistence type="evidence at protein level"/>
<accession>Q5SVS4</accession>
<accession>B2RN96</accession>
<accession>B4DZK3</accession>
<accession>F5H8H8</accession>
<feature type="initiator methionine" description="Removed" evidence="11">
    <location>
        <position position="1"/>
    </location>
</feature>
<feature type="chain" id="PRO_0000288916" description="Kidney mitochondrial carrier protein 1">
    <location>
        <begin position="2"/>
        <end position="291"/>
    </location>
</feature>
<feature type="transmembrane region" description="Helical; Name=1" evidence="3">
    <location>
        <begin position="9"/>
        <end position="26"/>
    </location>
</feature>
<feature type="transmembrane region" description="Helical; Name=2" evidence="3">
    <location>
        <begin position="71"/>
        <end position="89"/>
    </location>
</feature>
<feature type="transmembrane region" description="Helical; Name=3" evidence="3">
    <location>
        <begin position="105"/>
        <end position="124"/>
    </location>
</feature>
<feature type="transmembrane region" description="Helical; Name=4" evidence="3">
    <location>
        <begin position="164"/>
        <end position="183"/>
    </location>
</feature>
<feature type="transmembrane region" description="Helical; Name=5" evidence="3">
    <location>
        <begin position="204"/>
        <end position="224"/>
    </location>
</feature>
<feature type="transmembrane region" description="Helical; Name=6" evidence="3">
    <location>
        <begin position="264"/>
        <end position="283"/>
    </location>
</feature>
<feature type="repeat" description="Solcar 1">
    <location>
        <begin position="7"/>
        <end position="96"/>
    </location>
</feature>
<feature type="repeat" description="Solcar 2">
    <location>
        <begin position="104"/>
        <end position="189"/>
    </location>
</feature>
<feature type="repeat" description="Solcar 3">
    <location>
        <begin position="198"/>
        <end position="289"/>
    </location>
</feature>
<feature type="modified residue" description="N-acetylserine" evidence="11">
    <location>
        <position position="2"/>
    </location>
</feature>
<feature type="splice variant" id="VSP_053984" description="In isoform 2." evidence="6">
    <location>
        <begin position="1"/>
        <end position="51"/>
    </location>
</feature>
<feature type="sequence conflict" description="In Ref. 1; BAG64115." evidence="8" ref="1">
    <original>F</original>
    <variation>L</variation>
    <location>
        <position position="204"/>
    </location>
</feature>
<evidence type="ECO:0000250" key="1"/>
<evidence type="ECO:0000250" key="2">
    <source>
        <dbReference type="UniProtKB" id="Q9CR58"/>
    </source>
</evidence>
<evidence type="ECO:0000255" key="3"/>
<evidence type="ECO:0000269" key="4">
    <source>
    </source>
</evidence>
<evidence type="ECO:0000269" key="5">
    <source>
    </source>
</evidence>
<evidence type="ECO:0000303" key="6">
    <source>
    </source>
</evidence>
<evidence type="ECO:0000303" key="7">
    <source>
    </source>
</evidence>
<evidence type="ECO:0000305" key="8"/>
<evidence type="ECO:0000305" key="9">
    <source>
    </source>
</evidence>
<evidence type="ECO:0000312" key="10">
    <source>
        <dbReference type="HGNC" id="HGNC:27371"/>
    </source>
</evidence>
<evidence type="ECO:0007744" key="11">
    <source>
    </source>
</evidence>
<comment type="function">
    <text evidence="1 5 9">Antiporter that transports inorganic anions (sulfate, sulfite, thiosulfate and phosphate) and, to a lesser extent, a variety of dicarboxylates (e.g. malonate, malate and citramalate) and, even more so, aspartate (PubMed:31356773). The sulfate/sulfate exchange is much higher than the phosphate/phosphate and malate/malate exchanges (PubMed:31356773). The transport affinities is higher for sulfate and thiosulfate than for any other substrate (PubMed:31356773). May catalyze the export of sulfite and thiosulfate (the hydrogen sulfide degradation products) from the mitochondria, thereby modulating the level of the hydrogen sulfide (Probable). Also may mediate a very low unidirectional transport of sulfate, phosphate and (S)-malate (PubMed:31356773).</text>
</comment>
<comment type="catalytic activity">
    <reaction evidence="5">
        <text>sulfite(in) + sulfate(out) = sulfite(out) + sulfate(in)</text>
        <dbReference type="Rhea" id="RHEA:73207"/>
        <dbReference type="ChEBI" id="CHEBI:16189"/>
        <dbReference type="ChEBI" id="CHEBI:17359"/>
    </reaction>
</comment>
<comment type="catalytic activity">
    <reaction evidence="5">
        <text>thiosulfate(in) + sulfate(out) = thiosulfate(out) + sulfate(in)</text>
        <dbReference type="Rhea" id="RHEA:73215"/>
        <dbReference type="ChEBI" id="CHEBI:16189"/>
        <dbReference type="ChEBI" id="CHEBI:33542"/>
    </reaction>
</comment>
<comment type="catalytic activity">
    <reaction evidence="5">
        <text>sulfate(out) + phosphate(in) = sulfate(in) + phosphate(out)</text>
        <dbReference type="Rhea" id="RHEA:71631"/>
        <dbReference type="ChEBI" id="CHEBI:16189"/>
        <dbReference type="ChEBI" id="CHEBI:43474"/>
    </reaction>
</comment>
<comment type="catalytic activity">
    <reaction evidence="5">
        <text>oxalate(in) + sulfate(out) = oxalate(out) + sulfate(in)</text>
        <dbReference type="Rhea" id="RHEA:72275"/>
        <dbReference type="ChEBI" id="CHEBI:16189"/>
        <dbReference type="ChEBI" id="CHEBI:30623"/>
    </reaction>
</comment>
<comment type="catalytic activity">
    <reaction evidence="5">
        <text>malonate(in) + sulfate(out) = malonate(out) + sulfate(in)</text>
        <dbReference type="Rhea" id="RHEA:73195"/>
        <dbReference type="ChEBI" id="CHEBI:15792"/>
        <dbReference type="ChEBI" id="CHEBI:16189"/>
    </reaction>
</comment>
<comment type="catalytic activity">
    <reaction evidence="5">
        <text>maleate(in) + sulfate(out) = maleate(out) + sulfate(in)</text>
        <dbReference type="Rhea" id="RHEA:73199"/>
        <dbReference type="ChEBI" id="CHEBI:16189"/>
        <dbReference type="ChEBI" id="CHEBI:30780"/>
    </reaction>
</comment>
<comment type="catalytic activity">
    <reaction evidence="5">
        <text>(S)-malate(in) + sulfate(out) = (S)-malate(out) + sulfate(in)</text>
        <dbReference type="Rhea" id="RHEA:71615"/>
        <dbReference type="ChEBI" id="CHEBI:15589"/>
        <dbReference type="ChEBI" id="CHEBI:16189"/>
    </reaction>
</comment>
<comment type="catalytic activity">
    <reaction evidence="5">
        <text>(3S)-citramalate(in) + sulfate(out) = (3S)-citramalate(out) + sulfate(in)</text>
        <dbReference type="Rhea" id="RHEA:73223"/>
        <dbReference type="ChEBI" id="CHEBI:16189"/>
        <dbReference type="ChEBI" id="CHEBI:30936"/>
    </reaction>
</comment>
<comment type="catalytic activity">
    <reaction evidence="5">
        <text>(3R)-citramalate(in) + sulfate(out) = (3R)-citramalate(out) + sulfate(in)</text>
        <dbReference type="Rhea" id="RHEA:73227"/>
        <dbReference type="ChEBI" id="CHEBI:16189"/>
        <dbReference type="ChEBI" id="CHEBI:30934"/>
    </reaction>
</comment>
<comment type="catalytic activity">
    <reaction evidence="5">
        <text>sulfate(out) + succinate(in) = sulfate(in) + succinate(out)</text>
        <dbReference type="Rhea" id="RHEA:73411"/>
        <dbReference type="ChEBI" id="CHEBI:16189"/>
        <dbReference type="ChEBI" id="CHEBI:30031"/>
    </reaction>
</comment>
<comment type="catalytic activity">
    <reaction evidence="5">
        <text>(S,S)-tartrate(in) + sulfate(out) = (S,S)-tartrate(out) + sulfate(in)</text>
        <dbReference type="Rhea" id="RHEA:73407"/>
        <dbReference type="ChEBI" id="CHEBI:16189"/>
        <dbReference type="ChEBI" id="CHEBI:30927"/>
    </reaction>
</comment>
<comment type="catalytic activity">
    <reaction evidence="5">
        <text>(2R,3R)-tartrate(in) + sulfate(out) = (2R,3R)-tartrate(out) + sulfate(in)</text>
        <dbReference type="Rhea" id="RHEA:73403"/>
        <dbReference type="ChEBI" id="CHEBI:16189"/>
        <dbReference type="ChEBI" id="CHEBI:30924"/>
    </reaction>
</comment>
<comment type="catalytic activity">
    <reaction evidence="5">
        <text>D-aspartate(in) + sulfate(out) = D-aspartate(out) + sulfate(in)</text>
        <dbReference type="Rhea" id="RHEA:73399"/>
        <dbReference type="ChEBI" id="CHEBI:16189"/>
        <dbReference type="ChEBI" id="CHEBI:29990"/>
    </reaction>
</comment>
<comment type="catalytic activity">
    <reaction evidence="5">
        <text>L-aspartate(in) + sulfate(out) = L-aspartate(out) + sulfate(in)</text>
        <dbReference type="Rhea" id="RHEA:73395"/>
        <dbReference type="ChEBI" id="CHEBI:16189"/>
        <dbReference type="ChEBI" id="CHEBI:29991"/>
    </reaction>
</comment>
<comment type="catalytic activity">
    <reaction evidence="5">
        <text>sulfate(in) = sulfate(out)</text>
        <dbReference type="Rhea" id="RHEA:34983"/>
        <dbReference type="ChEBI" id="CHEBI:16189"/>
    </reaction>
</comment>
<comment type="catalytic activity">
    <reaction evidence="5">
        <text>phosphate(in) = phosphate(out)</text>
        <dbReference type="Rhea" id="RHEA:32823"/>
        <dbReference type="ChEBI" id="CHEBI:43474"/>
    </reaction>
</comment>
<comment type="catalytic activity">
    <reaction evidence="5">
        <text>(S)-malate(out) = (S)-malate(in)</text>
        <dbReference type="Rhea" id="RHEA:74555"/>
        <dbReference type="ChEBI" id="CHEBI:15589"/>
    </reaction>
</comment>
<comment type="activity regulation">
    <text evidence="5">Increased activity at pH 6.0 (PubMed:31356773). sulfate/sulfate exchange activity is inhibited strongly by pyridoxal 5'-phosphate, bathophenanthroline and the organic mercurials mersalyl, p-chloromercuribenzoate and HgCl2 (PubMed:31356773).</text>
</comment>
<comment type="biophysicochemical properties">
    <kinetics>
        <KM evidence="5">0.7 mM for sulfate</KM>
        <KM evidence="5">0.8 mM for thiosulfate</KM>
        <Vmax evidence="5">0.5 mmol/min/g protein toward sulfate</Vmax>
    </kinetics>
</comment>
<comment type="subunit">
    <text evidence="4">Interacts with VDAC1.</text>
</comment>
<comment type="subcellular location">
    <subcellularLocation>
        <location evidence="2">Mitochondrion inner membrane</location>
        <topology evidence="3">Multi-pass membrane protein</topology>
    </subcellularLocation>
</comment>
<comment type="alternative products">
    <event type="alternative splicing"/>
    <isoform>
        <id>Q5SVS4-1</id>
        <name>1</name>
        <sequence type="displayed"/>
    </isoform>
    <isoform>
        <id>Q5SVS4-2</id>
        <name>2</name>
        <sequence type="described" ref="VSP_053984"/>
    </isoform>
</comment>
<comment type="similarity">
    <text evidence="8">Belongs to the mitochondrial carrier (TC 2.A.29) family.</text>
</comment>
<name>KMCP1_HUMAN</name>
<keyword id="KW-0007">Acetylation</keyword>
<keyword id="KW-0025">Alternative splicing</keyword>
<keyword id="KW-0472">Membrane</keyword>
<keyword id="KW-0496">Mitochondrion</keyword>
<keyword id="KW-0999">Mitochondrion inner membrane</keyword>
<keyword id="KW-1267">Proteomics identification</keyword>
<keyword id="KW-1185">Reference proteome</keyword>
<keyword id="KW-0677">Repeat</keyword>
<keyword id="KW-0812">Transmembrane</keyword>
<keyword id="KW-1133">Transmembrane helix</keyword>
<keyword id="KW-0813">Transport</keyword>
<gene>
    <name evidence="10" type="primary">SLC25A30</name>
    <name evidence="7" type="synonym">KMCP1</name>
    <name evidence="7" type="synonym">UCP6</name>
</gene>